<sequence length="968" mass="109839">MPFTLGQRWISDTESELGLGTVVAMDARTVTLLFPSTGENRLYARSDSPVTRVMFNPGDTITSHEGWQLHIDEVKEENGLLVYVGTRLDTEETNVTLREVLLDSKLVFSKPQDRLFAGQIDRMDRFALRYRARKFQSEQYRMPYSGLRGQRTNLIPHQLNIAHDVGRRHAPRVLLADEVGLGKTIEAGMILHQQLLSGAAERVLIIVPETLQHQWLVEMLRRFNLRFALFDDERYTEAQHDAYNPFETEQLVICSLDFARRNKQRLEHLCDAEWDLLVVDEAHHLVWSTDAPSREYMAIEQLAERVPGVLLLTATPEQLGMESHFARLRLLDPNRFHDFEQFVEEQKNYRPVADAVAMLLAGNKLSNDELNRLGDLIGEQDIEPLLQAANSDRDDAQAARDELVSMLMDRHGTSRVLFRNTRNGVKGFPKRELHTVKLPLPTQYQTAIKVSGIMGARKSAEDRARDMLYPEQIYQEFEGDTGTWWNFDPRVEWLMGYLTSHRSQKVLVICAKATTALQLEQVLREREGIRAAVFHEGMSIIERDRAAAWFAEEDTGAQVLLCSEIGSEGRNFQFASNLVMFDLPFNPDLLEQRIGRLDRIGQAHDIQIHVPYLEKTAQSVLVRWYHEGLDAFEHTCPTGRAIYDSAYASLINYLAAPEETDGFDDLIKSCREQHEALKAQLEQGRDRLLEIHSNGGEKAQQLAQSIEEQDDDTNLIAFAMNLFDIVGINQDDRGDNLIVLTPSDHMLVPDFPGLPEDGCTITFERDVALSREDAQFITWEHPLIRNGLDLILSGDTGSSTISLLKNKALPVGTLLVELVYVVEAQAPKQLQLNRFLPPTPVRMLLDKNGNNLAAQVEFETFNRQLSAVNRHTGSKLVNAVQQDVHAILQLGETQIEKSARALIDNARREADEKLSGELSRLEALRAVNPNIRDDELAAIDSNRQQVLESLNQAGWRLDALRLIVVTHQ</sequence>
<accession>B5F778</accession>
<evidence type="ECO:0000255" key="1">
    <source>
        <dbReference type="HAMAP-Rule" id="MF_01821"/>
    </source>
</evidence>
<protein>
    <recommendedName>
        <fullName evidence="1">RNA polymerase-associated protein RapA</fullName>
        <ecNumber evidence="1">3.6.4.-</ecNumber>
    </recommendedName>
    <alternativeName>
        <fullName evidence="1">ATP-dependent helicase HepA</fullName>
    </alternativeName>
</protein>
<dbReference type="EC" id="3.6.4.-" evidence="1"/>
<dbReference type="EMBL" id="CP001138">
    <property type="protein sequence ID" value="ACH49248.1"/>
    <property type="molecule type" value="Genomic_DNA"/>
</dbReference>
<dbReference type="RefSeq" id="WP_001116966.1">
    <property type="nucleotide sequence ID" value="NC_011149.1"/>
</dbReference>
<dbReference type="SMR" id="B5F778"/>
<dbReference type="KEGG" id="sea:SeAg_B0106"/>
<dbReference type="HOGENOM" id="CLU_011520_0_0_6"/>
<dbReference type="Proteomes" id="UP000008819">
    <property type="component" value="Chromosome"/>
</dbReference>
<dbReference type="GO" id="GO:0005524">
    <property type="term" value="F:ATP binding"/>
    <property type="evidence" value="ECO:0007669"/>
    <property type="project" value="UniProtKB-UniRule"/>
</dbReference>
<dbReference type="GO" id="GO:0003677">
    <property type="term" value="F:DNA binding"/>
    <property type="evidence" value="ECO:0007669"/>
    <property type="project" value="UniProtKB-KW"/>
</dbReference>
<dbReference type="GO" id="GO:0004386">
    <property type="term" value="F:helicase activity"/>
    <property type="evidence" value="ECO:0007669"/>
    <property type="project" value="UniProtKB-UniRule"/>
</dbReference>
<dbReference type="GO" id="GO:0016817">
    <property type="term" value="F:hydrolase activity, acting on acid anhydrides"/>
    <property type="evidence" value="ECO:0007669"/>
    <property type="project" value="InterPro"/>
</dbReference>
<dbReference type="GO" id="GO:0006355">
    <property type="term" value="P:regulation of DNA-templated transcription"/>
    <property type="evidence" value="ECO:0007669"/>
    <property type="project" value="UniProtKB-UniRule"/>
</dbReference>
<dbReference type="CDD" id="cd18011">
    <property type="entry name" value="DEXDc_RapA"/>
    <property type="match status" value="1"/>
</dbReference>
<dbReference type="CDD" id="cd18793">
    <property type="entry name" value="SF2_C_SNF"/>
    <property type="match status" value="1"/>
</dbReference>
<dbReference type="FunFam" id="2.30.30.140:FF:000020">
    <property type="entry name" value="RNA polymerase-associated protein RapA"/>
    <property type="match status" value="1"/>
</dbReference>
<dbReference type="FunFam" id="3.30.360.80:FF:000001">
    <property type="entry name" value="RNA polymerase-associated protein RapA"/>
    <property type="match status" value="1"/>
</dbReference>
<dbReference type="FunFam" id="3.40.50.10810:FF:000012">
    <property type="entry name" value="RNA polymerase-associated protein RapA"/>
    <property type="match status" value="1"/>
</dbReference>
<dbReference type="FunFam" id="3.40.50.300:FF:000350">
    <property type="entry name" value="RNA polymerase-associated protein RapA"/>
    <property type="match status" value="1"/>
</dbReference>
<dbReference type="Gene3D" id="2.30.30.140">
    <property type="match status" value="1"/>
</dbReference>
<dbReference type="Gene3D" id="2.30.30.930">
    <property type="match status" value="1"/>
</dbReference>
<dbReference type="Gene3D" id="3.30.360.80">
    <property type="match status" value="1"/>
</dbReference>
<dbReference type="Gene3D" id="6.10.140.1500">
    <property type="match status" value="1"/>
</dbReference>
<dbReference type="Gene3D" id="6.10.140.2230">
    <property type="match status" value="1"/>
</dbReference>
<dbReference type="Gene3D" id="3.40.50.300">
    <property type="entry name" value="P-loop containing nucleotide triphosphate hydrolases"/>
    <property type="match status" value="1"/>
</dbReference>
<dbReference type="Gene3D" id="3.40.50.10810">
    <property type="entry name" value="Tandem AAA-ATPase domain"/>
    <property type="match status" value="1"/>
</dbReference>
<dbReference type="HAMAP" id="MF_01821">
    <property type="entry name" value="Helicase_RapA"/>
    <property type="match status" value="1"/>
</dbReference>
<dbReference type="InterPro" id="IPR014001">
    <property type="entry name" value="Helicase_ATP-bd"/>
</dbReference>
<dbReference type="InterPro" id="IPR001650">
    <property type="entry name" value="Helicase_C-like"/>
</dbReference>
<dbReference type="InterPro" id="IPR023949">
    <property type="entry name" value="Helicase_RapA"/>
</dbReference>
<dbReference type="InterPro" id="IPR027417">
    <property type="entry name" value="P-loop_NTPase"/>
</dbReference>
<dbReference type="InterPro" id="IPR022737">
    <property type="entry name" value="RapA_C"/>
</dbReference>
<dbReference type="InterPro" id="IPR038718">
    <property type="entry name" value="SNF2-like_sf"/>
</dbReference>
<dbReference type="InterPro" id="IPR049730">
    <property type="entry name" value="SNF2/RAD54-like_C"/>
</dbReference>
<dbReference type="InterPro" id="IPR000330">
    <property type="entry name" value="SNF2_N"/>
</dbReference>
<dbReference type="InterPro" id="IPR040765">
    <property type="entry name" value="Tudor_1_RapA"/>
</dbReference>
<dbReference type="InterPro" id="IPR040766">
    <property type="entry name" value="Tudor_2_RapA"/>
</dbReference>
<dbReference type="NCBIfam" id="NF003426">
    <property type="entry name" value="PRK04914.1"/>
    <property type="match status" value="1"/>
</dbReference>
<dbReference type="PANTHER" id="PTHR45766">
    <property type="entry name" value="DNA ANNEALING HELICASE AND ENDONUCLEASE ZRANB3 FAMILY MEMBER"/>
    <property type="match status" value="1"/>
</dbReference>
<dbReference type="PANTHER" id="PTHR45766:SF6">
    <property type="entry name" value="SWI_SNF-RELATED MATRIX-ASSOCIATED ACTIN-DEPENDENT REGULATOR OF CHROMATIN SUBFAMILY A-LIKE PROTEIN 1"/>
    <property type="match status" value="1"/>
</dbReference>
<dbReference type="Pfam" id="PF00271">
    <property type="entry name" value="Helicase_C"/>
    <property type="match status" value="1"/>
</dbReference>
<dbReference type="Pfam" id="PF12137">
    <property type="entry name" value="RapA_C"/>
    <property type="match status" value="1"/>
</dbReference>
<dbReference type="Pfam" id="PF00176">
    <property type="entry name" value="SNF2-rel_dom"/>
    <property type="match status" value="1"/>
</dbReference>
<dbReference type="Pfam" id="PF18339">
    <property type="entry name" value="Tudor_1_RapA"/>
    <property type="match status" value="1"/>
</dbReference>
<dbReference type="Pfam" id="PF18337">
    <property type="entry name" value="Tudor_RapA"/>
    <property type="match status" value="1"/>
</dbReference>
<dbReference type="SMART" id="SM00487">
    <property type="entry name" value="DEXDc"/>
    <property type="match status" value="1"/>
</dbReference>
<dbReference type="SMART" id="SM00490">
    <property type="entry name" value="HELICc"/>
    <property type="match status" value="1"/>
</dbReference>
<dbReference type="SUPFAM" id="SSF52540">
    <property type="entry name" value="P-loop containing nucleoside triphosphate hydrolases"/>
    <property type="match status" value="2"/>
</dbReference>
<dbReference type="PROSITE" id="PS51192">
    <property type="entry name" value="HELICASE_ATP_BIND_1"/>
    <property type="match status" value="1"/>
</dbReference>
<dbReference type="PROSITE" id="PS51194">
    <property type="entry name" value="HELICASE_CTER"/>
    <property type="match status" value="1"/>
</dbReference>
<keyword id="KW-0010">Activator</keyword>
<keyword id="KW-0067">ATP-binding</keyword>
<keyword id="KW-0238">DNA-binding</keyword>
<keyword id="KW-0347">Helicase</keyword>
<keyword id="KW-0378">Hydrolase</keyword>
<keyword id="KW-0547">Nucleotide-binding</keyword>
<keyword id="KW-0804">Transcription</keyword>
<keyword id="KW-0805">Transcription regulation</keyword>
<proteinExistence type="inferred from homology"/>
<gene>
    <name evidence="1" type="primary">rapA</name>
    <name type="ordered locus">SeAg_B0106</name>
</gene>
<name>RAPA_SALA4</name>
<organism>
    <name type="scientific">Salmonella agona (strain SL483)</name>
    <dbReference type="NCBI Taxonomy" id="454166"/>
    <lineage>
        <taxon>Bacteria</taxon>
        <taxon>Pseudomonadati</taxon>
        <taxon>Pseudomonadota</taxon>
        <taxon>Gammaproteobacteria</taxon>
        <taxon>Enterobacterales</taxon>
        <taxon>Enterobacteriaceae</taxon>
        <taxon>Salmonella</taxon>
    </lineage>
</organism>
<comment type="function">
    <text evidence="1">Transcription regulator that activates transcription by stimulating RNA polymerase (RNAP) recycling in case of stress conditions such as supercoiled DNA or high salt concentrations. Probably acts by releasing the RNAP, when it is trapped or immobilized on tightly supercoiled DNA. Does not activate transcription on linear DNA. Probably not involved in DNA repair.</text>
</comment>
<comment type="subunit">
    <text evidence="1">Interacts with the RNAP. Has a higher affinity for the core RNAP than for the holoenzyme. Its ATPase activity is stimulated by binding to RNAP.</text>
</comment>
<comment type="similarity">
    <text evidence="1">Belongs to the SNF2/RAD54 helicase family. RapA subfamily.</text>
</comment>
<feature type="chain" id="PRO_1000188183" description="RNA polymerase-associated protein RapA">
    <location>
        <begin position="1"/>
        <end position="968"/>
    </location>
</feature>
<feature type="domain" description="Helicase ATP-binding" evidence="1">
    <location>
        <begin position="164"/>
        <end position="334"/>
    </location>
</feature>
<feature type="domain" description="Helicase C-terminal" evidence="1">
    <location>
        <begin position="490"/>
        <end position="685"/>
    </location>
</feature>
<feature type="short sequence motif" description="DEAH box">
    <location>
        <begin position="280"/>
        <end position="283"/>
    </location>
</feature>
<feature type="binding site" evidence="1">
    <location>
        <begin position="177"/>
        <end position="184"/>
    </location>
    <ligand>
        <name>ATP</name>
        <dbReference type="ChEBI" id="CHEBI:30616"/>
    </ligand>
</feature>
<reference key="1">
    <citation type="journal article" date="2011" name="J. Bacteriol.">
        <title>Comparative genomics of 28 Salmonella enterica isolates: evidence for CRISPR-mediated adaptive sublineage evolution.</title>
        <authorList>
            <person name="Fricke W.F."/>
            <person name="Mammel M.K."/>
            <person name="McDermott P.F."/>
            <person name="Tartera C."/>
            <person name="White D.G."/>
            <person name="Leclerc J.E."/>
            <person name="Ravel J."/>
            <person name="Cebula T.A."/>
        </authorList>
    </citation>
    <scope>NUCLEOTIDE SEQUENCE [LARGE SCALE GENOMIC DNA]</scope>
    <source>
        <strain>SL483</strain>
    </source>
</reference>